<keyword id="KW-0067">ATP-binding</keyword>
<keyword id="KW-1003">Cell membrane</keyword>
<keyword id="KW-0378">Hydrolase</keyword>
<keyword id="KW-0472">Membrane</keyword>
<keyword id="KW-0479">Metal-binding</keyword>
<keyword id="KW-0482">Metalloprotease</keyword>
<keyword id="KW-0547">Nucleotide-binding</keyword>
<keyword id="KW-0645">Protease</keyword>
<keyword id="KW-1185">Reference proteome</keyword>
<keyword id="KW-0812">Transmembrane</keyword>
<keyword id="KW-1133">Transmembrane helix</keyword>
<keyword id="KW-0862">Zinc</keyword>
<accession>B3R057</accession>
<comment type="function">
    <text evidence="1">Acts as a processive, ATP-dependent zinc metallopeptidase for both cytoplasmic and membrane proteins. Plays a role in the quality control of integral membrane proteins.</text>
</comment>
<comment type="cofactor">
    <cofactor evidence="1">
        <name>Zn(2+)</name>
        <dbReference type="ChEBI" id="CHEBI:29105"/>
    </cofactor>
    <text evidence="1">Binds 1 zinc ion per subunit.</text>
</comment>
<comment type="subunit">
    <text evidence="1">Homohexamer.</text>
</comment>
<comment type="subcellular location">
    <subcellularLocation>
        <location evidence="1">Cell membrane</location>
        <topology evidence="1">Multi-pass membrane protein</topology>
        <orientation evidence="1">Cytoplasmic side</orientation>
    </subcellularLocation>
</comment>
<comment type="similarity">
    <text evidence="1">In the central section; belongs to the AAA ATPase family.</text>
</comment>
<comment type="similarity">
    <text evidence="1">In the C-terminal section; belongs to the peptidase M41 family.</text>
</comment>
<feature type="chain" id="PRO_0000400375" description="ATP-dependent zinc metalloprotease FtsH 1">
    <location>
        <begin position="1"/>
        <end position="600"/>
    </location>
</feature>
<feature type="topological domain" description="Cytoplasmic" evidence="1">
    <location>
        <begin position="1"/>
        <end position="8"/>
    </location>
</feature>
<feature type="transmembrane region" description="Helical" evidence="1">
    <location>
        <begin position="9"/>
        <end position="29"/>
    </location>
</feature>
<feature type="topological domain" description="Extracellular" evidence="1">
    <location>
        <begin position="30"/>
        <end position="130"/>
    </location>
</feature>
<feature type="transmembrane region" description="Helical" evidence="1">
    <location>
        <begin position="131"/>
        <end position="151"/>
    </location>
</feature>
<feature type="topological domain" description="Cytoplasmic" evidence="1">
    <location>
        <begin position="152"/>
        <end position="600"/>
    </location>
</feature>
<feature type="active site" evidence="1">
    <location>
        <position position="438"/>
    </location>
</feature>
<feature type="binding site" evidence="1">
    <location>
        <begin position="215"/>
        <end position="222"/>
    </location>
    <ligand>
        <name>ATP</name>
        <dbReference type="ChEBI" id="CHEBI:30616"/>
    </ligand>
</feature>
<feature type="binding site" evidence="1">
    <location>
        <position position="437"/>
    </location>
    <ligand>
        <name>Zn(2+)</name>
        <dbReference type="ChEBI" id="CHEBI:29105"/>
        <note>catalytic</note>
    </ligand>
</feature>
<feature type="binding site" evidence="1">
    <location>
        <position position="441"/>
    </location>
    <ligand>
        <name>Zn(2+)</name>
        <dbReference type="ChEBI" id="CHEBI:29105"/>
        <note>catalytic</note>
    </ligand>
</feature>
<feature type="binding site" evidence="1">
    <location>
        <position position="513"/>
    </location>
    <ligand>
        <name>Zn(2+)</name>
        <dbReference type="ChEBI" id="CHEBI:29105"/>
        <note>catalytic</note>
    </ligand>
</feature>
<organism>
    <name type="scientific">Phytoplasma mali (strain AT)</name>
    <dbReference type="NCBI Taxonomy" id="482235"/>
    <lineage>
        <taxon>Bacteria</taxon>
        <taxon>Bacillati</taxon>
        <taxon>Mycoplasmatota</taxon>
        <taxon>Mollicutes</taxon>
        <taxon>Acholeplasmatales</taxon>
        <taxon>Acholeplasmataceae</taxon>
        <taxon>Candidatus Phytoplasma</taxon>
        <taxon>16SrX (Apple proliferation group)</taxon>
    </lineage>
</organism>
<name>FTSH1_PHYMT</name>
<gene>
    <name evidence="1" type="primary">ftsH1</name>
    <name type="ordered locus">ATP_00034</name>
</gene>
<evidence type="ECO:0000255" key="1">
    <source>
        <dbReference type="HAMAP-Rule" id="MF_01458"/>
    </source>
</evidence>
<reference key="1">
    <citation type="journal article" date="2008" name="BMC Genomics">
        <title>The linear chromosome of the plant-pathogenic mycoplasma 'Candidatus Phytoplasma mali'.</title>
        <authorList>
            <person name="Kube M."/>
            <person name="Schneider B."/>
            <person name="Kuhl H."/>
            <person name="Dandekar T."/>
            <person name="Heitmann K."/>
            <person name="Migdoll A.M."/>
            <person name="Reinhardt R."/>
            <person name="Seemueller E."/>
        </authorList>
    </citation>
    <scope>NUCLEOTIDE SEQUENCE [LARGE SCALE GENOMIC DNA]</scope>
    <source>
        <strain>AT</strain>
    </source>
</reference>
<sequence>MKTHYFKKIFNLKFLVIFFSILFCILLILDLTFERRIKGIKKRTDEIIKKIKDDNHLVEEIVFYETNSTIFEKSFYRVEILVKNKNNLTTKEKWYAVVDSIFFHEIHSLIKGRENIQIKDPKTDFHLSELILSLVPIVSSTIFMFYIISNIKKSSGKLNSNAKVSAKQKSLFTFKDVAGNTEEKEEMTELIDFLKQPQKYETIGAAIPKGVLLEGPPGTGKTLLAKALAGEASVPFYAVSGSEFVEMYVGVGASRVRTLFKEAKLNAPCVLFIDEIDVLGGKRGGNSSGGNQEKDQTLNQLLTEMDGFTQAKGIIVIGATNRADMLDAALLRPGRFDRKILVNLPDIKSRAEILKLHAQNKKLSSDIDFHQLAQQTPGMSGAQLAAVLNEASILTVRNHKDFITMTELSEALDRVLMGPAKKSIKYDPEERRMVAYHEAGHAVIGIKLKHAQKVQKITIIPRGNAGGYNLMMPEKETFFSSRKRMLAQIQSFLGGRVAEELVFDDISSGAFDDFRQATKIARLMVTKYGMSDLGVSQDSEFSDKKLIDTAIKKIIDNCYARTKHLMLENKTLLDQIAHLLLEQETITQAEIEQLVVNTKK</sequence>
<protein>
    <recommendedName>
        <fullName evidence="1">ATP-dependent zinc metalloprotease FtsH 1</fullName>
        <ecNumber evidence="1">3.4.24.-</ecNumber>
    </recommendedName>
</protein>
<dbReference type="EC" id="3.4.24.-" evidence="1"/>
<dbReference type="EMBL" id="CU469464">
    <property type="protein sequence ID" value="CAP18221.1"/>
    <property type="molecule type" value="Genomic_DNA"/>
</dbReference>
<dbReference type="SMR" id="B3R057"/>
<dbReference type="STRING" id="37692.ATP_00034"/>
<dbReference type="KEGG" id="pml:ATP_00034"/>
<dbReference type="eggNOG" id="COG0465">
    <property type="taxonomic scope" value="Bacteria"/>
</dbReference>
<dbReference type="HOGENOM" id="CLU_000688_16_2_14"/>
<dbReference type="Proteomes" id="UP000002020">
    <property type="component" value="Chromosome"/>
</dbReference>
<dbReference type="GO" id="GO:0005886">
    <property type="term" value="C:plasma membrane"/>
    <property type="evidence" value="ECO:0007669"/>
    <property type="project" value="UniProtKB-SubCell"/>
</dbReference>
<dbReference type="GO" id="GO:0005524">
    <property type="term" value="F:ATP binding"/>
    <property type="evidence" value="ECO:0007669"/>
    <property type="project" value="UniProtKB-UniRule"/>
</dbReference>
<dbReference type="GO" id="GO:0016887">
    <property type="term" value="F:ATP hydrolysis activity"/>
    <property type="evidence" value="ECO:0007669"/>
    <property type="project" value="UniProtKB-UniRule"/>
</dbReference>
<dbReference type="GO" id="GO:0004176">
    <property type="term" value="F:ATP-dependent peptidase activity"/>
    <property type="evidence" value="ECO:0007669"/>
    <property type="project" value="InterPro"/>
</dbReference>
<dbReference type="GO" id="GO:0004222">
    <property type="term" value="F:metalloendopeptidase activity"/>
    <property type="evidence" value="ECO:0007669"/>
    <property type="project" value="InterPro"/>
</dbReference>
<dbReference type="GO" id="GO:0008270">
    <property type="term" value="F:zinc ion binding"/>
    <property type="evidence" value="ECO:0007669"/>
    <property type="project" value="UniProtKB-UniRule"/>
</dbReference>
<dbReference type="GO" id="GO:0030163">
    <property type="term" value="P:protein catabolic process"/>
    <property type="evidence" value="ECO:0007669"/>
    <property type="project" value="UniProtKB-UniRule"/>
</dbReference>
<dbReference type="GO" id="GO:0006508">
    <property type="term" value="P:proteolysis"/>
    <property type="evidence" value="ECO:0007669"/>
    <property type="project" value="UniProtKB-KW"/>
</dbReference>
<dbReference type="CDD" id="cd19501">
    <property type="entry name" value="RecA-like_FtsH"/>
    <property type="match status" value="1"/>
</dbReference>
<dbReference type="FunFam" id="1.10.8.60:FF:000001">
    <property type="entry name" value="ATP-dependent zinc metalloprotease FtsH"/>
    <property type="match status" value="1"/>
</dbReference>
<dbReference type="FunFam" id="1.20.58.760:FF:000001">
    <property type="entry name" value="ATP-dependent zinc metalloprotease FtsH"/>
    <property type="match status" value="1"/>
</dbReference>
<dbReference type="FunFam" id="3.40.50.300:FF:000001">
    <property type="entry name" value="ATP-dependent zinc metalloprotease FtsH"/>
    <property type="match status" value="1"/>
</dbReference>
<dbReference type="Gene3D" id="1.10.8.60">
    <property type="match status" value="1"/>
</dbReference>
<dbReference type="Gene3D" id="3.40.50.300">
    <property type="entry name" value="P-loop containing nucleotide triphosphate hydrolases"/>
    <property type="match status" value="1"/>
</dbReference>
<dbReference type="Gene3D" id="1.20.58.760">
    <property type="entry name" value="Peptidase M41"/>
    <property type="match status" value="1"/>
</dbReference>
<dbReference type="HAMAP" id="MF_01458">
    <property type="entry name" value="FtsH"/>
    <property type="match status" value="1"/>
</dbReference>
<dbReference type="InterPro" id="IPR003593">
    <property type="entry name" value="AAA+_ATPase"/>
</dbReference>
<dbReference type="InterPro" id="IPR041569">
    <property type="entry name" value="AAA_lid_3"/>
</dbReference>
<dbReference type="InterPro" id="IPR003959">
    <property type="entry name" value="ATPase_AAA_core"/>
</dbReference>
<dbReference type="InterPro" id="IPR003960">
    <property type="entry name" value="ATPase_AAA_CS"/>
</dbReference>
<dbReference type="InterPro" id="IPR005936">
    <property type="entry name" value="FtsH"/>
</dbReference>
<dbReference type="InterPro" id="IPR027417">
    <property type="entry name" value="P-loop_NTPase"/>
</dbReference>
<dbReference type="InterPro" id="IPR000642">
    <property type="entry name" value="Peptidase_M41"/>
</dbReference>
<dbReference type="InterPro" id="IPR037219">
    <property type="entry name" value="Peptidase_M41-like"/>
</dbReference>
<dbReference type="NCBIfam" id="TIGR01241">
    <property type="entry name" value="FtsH_fam"/>
    <property type="match status" value="1"/>
</dbReference>
<dbReference type="PANTHER" id="PTHR23076:SF113">
    <property type="entry name" value="ATP-DEPENDENT ZINC METALLOPROTEASE FTSH 1, CHLOROPLASTIC-RELATED"/>
    <property type="match status" value="1"/>
</dbReference>
<dbReference type="PANTHER" id="PTHR23076">
    <property type="entry name" value="METALLOPROTEASE M41 FTSH"/>
    <property type="match status" value="1"/>
</dbReference>
<dbReference type="Pfam" id="PF00004">
    <property type="entry name" value="AAA"/>
    <property type="match status" value="1"/>
</dbReference>
<dbReference type="Pfam" id="PF17862">
    <property type="entry name" value="AAA_lid_3"/>
    <property type="match status" value="1"/>
</dbReference>
<dbReference type="Pfam" id="PF01434">
    <property type="entry name" value="Peptidase_M41"/>
    <property type="match status" value="1"/>
</dbReference>
<dbReference type="SMART" id="SM00382">
    <property type="entry name" value="AAA"/>
    <property type="match status" value="1"/>
</dbReference>
<dbReference type="SUPFAM" id="SSF140990">
    <property type="entry name" value="FtsH protease domain-like"/>
    <property type="match status" value="1"/>
</dbReference>
<dbReference type="SUPFAM" id="SSF52540">
    <property type="entry name" value="P-loop containing nucleoside triphosphate hydrolases"/>
    <property type="match status" value="1"/>
</dbReference>
<dbReference type="PROSITE" id="PS00674">
    <property type="entry name" value="AAA"/>
    <property type="match status" value="1"/>
</dbReference>
<proteinExistence type="inferred from homology"/>